<protein>
    <recommendedName>
        <fullName evidence="1">Large ribosomal subunit protein uL23</fullName>
    </recommendedName>
    <alternativeName>
        <fullName evidence="2">50S ribosomal protein L23</fullName>
    </alternativeName>
</protein>
<evidence type="ECO:0000255" key="1">
    <source>
        <dbReference type="HAMAP-Rule" id="MF_01369"/>
    </source>
</evidence>
<evidence type="ECO:0000305" key="2"/>
<organism>
    <name type="scientific">Staphylothermus marinus (strain ATCC 43588 / DSM 3639 / JCM 9404 / F1)</name>
    <dbReference type="NCBI Taxonomy" id="399550"/>
    <lineage>
        <taxon>Archaea</taxon>
        <taxon>Thermoproteota</taxon>
        <taxon>Thermoprotei</taxon>
        <taxon>Desulfurococcales</taxon>
        <taxon>Desulfurococcaceae</taxon>
        <taxon>Staphylothermus</taxon>
    </lineage>
</organism>
<comment type="function">
    <text evidence="1">Binds to 23S rRNA. One of the proteins that surrounds the polypeptide exit tunnel on the outside of the ribosome.</text>
</comment>
<comment type="subunit">
    <text evidence="1">Part of the 50S ribosomal subunit. Contacts protein L29.</text>
</comment>
<comment type="similarity">
    <text evidence="1">Belongs to the universal ribosomal protein uL23 family.</text>
</comment>
<reference key="1">
    <citation type="journal article" date="2009" name="BMC Genomics">
        <title>The complete genome sequence of Staphylothermus marinus reveals differences in sulfur metabolism among heterotrophic Crenarchaeota.</title>
        <authorList>
            <person name="Anderson I.J."/>
            <person name="Dharmarajan L."/>
            <person name="Rodriguez J."/>
            <person name="Hooper S."/>
            <person name="Porat I."/>
            <person name="Ulrich L.E."/>
            <person name="Elkins J.G."/>
            <person name="Mavromatis K."/>
            <person name="Sun H."/>
            <person name="Land M."/>
            <person name="Lapidus A."/>
            <person name="Lucas S."/>
            <person name="Barry K."/>
            <person name="Huber H."/>
            <person name="Zhulin I.B."/>
            <person name="Whitman W.B."/>
            <person name="Mukhopadhyay B."/>
            <person name="Woese C."/>
            <person name="Bristow J."/>
            <person name="Kyrpides N."/>
        </authorList>
    </citation>
    <scope>NUCLEOTIDE SEQUENCE [LARGE SCALE GENOMIC DNA]</scope>
    <source>
        <strain>ATCC 43588 / DSM 3639 / JCM 9404 / F1</strain>
    </source>
</reference>
<reference key="2">
    <citation type="journal article" date="2009" name="Stand. Genomic Sci.">
        <title>Complete genome sequence of Staphylothermus marinus Stetter and Fiala 1986 type strain F1.</title>
        <authorList>
            <person name="Anderson I.J."/>
            <person name="Sun H."/>
            <person name="Lapidus A."/>
            <person name="Copeland A."/>
            <person name="Glavina Del Rio T."/>
            <person name="Tice H."/>
            <person name="Dalin E."/>
            <person name="Lucas S."/>
            <person name="Barry K."/>
            <person name="Land M."/>
            <person name="Richardson P."/>
            <person name="Huber H."/>
            <person name="Kyrpides N.C."/>
        </authorList>
    </citation>
    <scope>NUCLEOTIDE SEQUENCE [LARGE SCALE GENOMIC DNA]</scope>
    <source>
        <strain>ATCC 43588 / DSM 3639 / JCM 9404 / F1</strain>
    </source>
</reference>
<dbReference type="EMBL" id="CP000575">
    <property type="protein sequence ID" value="ABN70116.1"/>
    <property type="molecule type" value="Genomic_DNA"/>
</dbReference>
<dbReference type="RefSeq" id="WP_011839307.1">
    <property type="nucleotide sequence ID" value="NC_009033.1"/>
</dbReference>
<dbReference type="SMR" id="A3DNA6"/>
<dbReference type="STRING" id="399550.Smar_1018"/>
<dbReference type="GeneID" id="4906833"/>
<dbReference type="KEGG" id="smr:Smar_1018"/>
<dbReference type="eggNOG" id="arCOG04072">
    <property type="taxonomic scope" value="Archaea"/>
</dbReference>
<dbReference type="HOGENOM" id="CLU_037562_4_2_2"/>
<dbReference type="OrthoDB" id="7751at2157"/>
<dbReference type="Proteomes" id="UP000000254">
    <property type="component" value="Chromosome"/>
</dbReference>
<dbReference type="GO" id="GO:1990904">
    <property type="term" value="C:ribonucleoprotein complex"/>
    <property type="evidence" value="ECO:0007669"/>
    <property type="project" value="UniProtKB-KW"/>
</dbReference>
<dbReference type="GO" id="GO:0005840">
    <property type="term" value="C:ribosome"/>
    <property type="evidence" value="ECO:0007669"/>
    <property type="project" value="UniProtKB-KW"/>
</dbReference>
<dbReference type="GO" id="GO:0019843">
    <property type="term" value="F:rRNA binding"/>
    <property type="evidence" value="ECO:0007669"/>
    <property type="project" value="UniProtKB-UniRule"/>
</dbReference>
<dbReference type="GO" id="GO:0003735">
    <property type="term" value="F:structural constituent of ribosome"/>
    <property type="evidence" value="ECO:0007669"/>
    <property type="project" value="InterPro"/>
</dbReference>
<dbReference type="GO" id="GO:0006412">
    <property type="term" value="P:translation"/>
    <property type="evidence" value="ECO:0007669"/>
    <property type="project" value="UniProtKB-UniRule"/>
</dbReference>
<dbReference type="FunFam" id="3.30.70.330:FF:000532">
    <property type="entry name" value="50S ribosomal protein L23"/>
    <property type="match status" value="1"/>
</dbReference>
<dbReference type="Gene3D" id="3.30.70.330">
    <property type="match status" value="1"/>
</dbReference>
<dbReference type="HAMAP" id="MF_01369_A">
    <property type="entry name" value="Ribosomal_uL23_A"/>
    <property type="match status" value="1"/>
</dbReference>
<dbReference type="HAMAP" id="MF_01369_B">
    <property type="entry name" value="Ribosomal_uL23_B"/>
    <property type="match status" value="1"/>
</dbReference>
<dbReference type="InterPro" id="IPR012677">
    <property type="entry name" value="Nucleotide-bd_a/b_plait_sf"/>
</dbReference>
<dbReference type="InterPro" id="IPR019985">
    <property type="entry name" value="Ribosomal_uL23"/>
</dbReference>
<dbReference type="InterPro" id="IPR013025">
    <property type="entry name" value="Ribosomal_uL23-like"/>
</dbReference>
<dbReference type="InterPro" id="IPR012678">
    <property type="entry name" value="Ribosomal_uL23/eL15/eS24_sf"/>
</dbReference>
<dbReference type="InterPro" id="IPR001014">
    <property type="entry name" value="Ribosomal_uL23_CS"/>
</dbReference>
<dbReference type="NCBIfam" id="NF011118">
    <property type="entry name" value="PRK14548.1"/>
    <property type="match status" value="1"/>
</dbReference>
<dbReference type="NCBIfam" id="TIGR03636">
    <property type="entry name" value="uL23_arch"/>
    <property type="match status" value="1"/>
</dbReference>
<dbReference type="PANTHER" id="PTHR11620">
    <property type="entry name" value="60S RIBOSOMAL PROTEIN L23A"/>
    <property type="match status" value="1"/>
</dbReference>
<dbReference type="Pfam" id="PF00276">
    <property type="entry name" value="Ribosomal_L23"/>
    <property type="match status" value="1"/>
</dbReference>
<dbReference type="SUPFAM" id="SSF54189">
    <property type="entry name" value="Ribosomal proteins S24e, L23 and L15e"/>
    <property type="match status" value="1"/>
</dbReference>
<dbReference type="PROSITE" id="PS00050">
    <property type="entry name" value="RIBOSOMAL_L23"/>
    <property type="match status" value="1"/>
</dbReference>
<sequence>MSMDEGRLYKIIIRPVHSEKALNLIDKENTLTFIVDRNASKKDIKDAVELVFGVKVLKVRTLITSRGEKKAYVKLAPEHRASEIASQLGLI</sequence>
<accession>A3DNA6</accession>
<name>RL23_STAMF</name>
<feature type="chain" id="PRO_1000068160" description="Large ribosomal subunit protein uL23">
    <location>
        <begin position="1"/>
        <end position="91"/>
    </location>
</feature>
<proteinExistence type="inferred from homology"/>
<gene>
    <name evidence="1" type="primary">rpl23</name>
    <name type="ordered locus">Smar_1018</name>
</gene>
<keyword id="KW-1185">Reference proteome</keyword>
<keyword id="KW-0687">Ribonucleoprotein</keyword>
<keyword id="KW-0689">Ribosomal protein</keyword>
<keyword id="KW-0694">RNA-binding</keyword>
<keyword id="KW-0699">rRNA-binding</keyword>